<feature type="chain" id="PRO_1000093862" description="Holo-[acyl-carrier-protein] synthase">
    <location>
        <begin position="1"/>
        <end position="140"/>
    </location>
</feature>
<feature type="binding site" evidence="1">
    <location>
        <position position="9"/>
    </location>
    <ligand>
        <name>Mg(2+)</name>
        <dbReference type="ChEBI" id="CHEBI:18420"/>
    </ligand>
</feature>
<feature type="binding site" evidence="1">
    <location>
        <position position="63"/>
    </location>
    <ligand>
        <name>Mg(2+)</name>
        <dbReference type="ChEBI" id="CHEBI:18420"/>
    </ligand>
</feature>
<keyword id="KW-0963">Cytoplasm</keyword>
<keyword id="KW-0275">Fatty acid biosynthesis</keyword>
<keyword id="KW-0276">Fatty acid metabolism</keyword>
<keyword id="KW-0444">Lipid biosynthesis</keyword>
<keyword id="KW-0443">Lipid metabolism</keyword>
<keyword id="KW-0460">Magnesium</keyword>
<keyword id="KW-0479">Metal-binding</keyword>
<keyword id="KW-0808">Transferase</keyword>
<dbReference type="EC" id="2.7.8.7" evidence="1"/>
<dbReference type="EMBL" id="CP001052">
    <property type="protein sequence ID" value="ACD17289.1"/>
    <property type="molecule type" value="Genomic_DNA"/>
</dbReference>
<dbReference type="RefSeq" id="WP_012433874.1">
    <property type="nucleotide sequence ID" value="NC_010681.1"/>
</dbReference>
<dbReference type="SMR" id="B2SZV1"/>
<dbReference type="STRING" id="398527.Bphyt_2895"/>
<dbReference type="KEGG" id="bpy:Bphyt_2895"/>
<dbReference type="eggNOG" id="COG0736">
    <property type="taxonomic scope" value="Bacteria"/>
</dbReference>
<dbReference type="HOGENOM" id="CLU_089696_3_1_4"/>
<dbReference type="OrthoDB" id="517356at2"/>
<dbReference type="Proteomes" id="UP000001739">
    <property type="component" value="Chromosome 1"/>
</dbReference>
<dbReference type="GO" id="GO:0005737">
    <property type="term" value="C:cytoplasm"/>
    <property type="evidence" value="ECO:0007669"/>
    <property type="project" value="UniProtKB-SubCell"/>
</dbReference>
<dbReference type="GO" id="GO:0008897">
    <property type="term" value="F:holo-[acyl-carrier-protein] synthase activity"/>
    <property type="evidence" value="ECO:0007669"/>
    <property type="project" value="UniProtKB-UniRule"/>
</dbReference>
<dbReference type="GO" id="GO:0000287">
    <property type="term" value="F:magnesium ion binding"/>
    <property type="evidence" value="ECO:0007669"/>
    <property type="project" value="UniProtKB-UniRule"/>
</dbReference>
<dbReference type="GO" id="GO:0006633">
    <property type="term" value="P:fatty acid biosynthetic process"/>
    <property type="evidence" value="ECO:0007669"/>
    <property type="project" value="UniProtKB-UniRule"/>
</dbReference>
<dbReference type="Gene3D" id="3.90.470.20">
    <property type="entry name" value="4'-phosphopantetheinyl transferase domain"/>
    <property type="match status" value="1"/>
</dbReference>
<dbReference type="HAMAP" id="MF_00101">
    <property type="entry name" value="AcpS"/>
    <property type="match status" value="1"/>
</dbReference>
<dbReference type="InterPro" id="IPR008278">
    <property type="entry name" value="4-PPantetheinyl_Trfase_dom"/>
</dbReference>
<dbReference type="InterPro" id="IPR037143">
    <property type="entry name" value="4-PPantetheinyl_Trfase_dom_sf"/>
</dbReference>
<dbReference type="InterPro" id="IPR002582">
    <property type="entry name" value="ACPS"/>
</dbReference>
<dbReference type="InterPro" id="IPR004568">
    <property type="entry name" value="Ppantetheine-prot_Trfase_dom"/>
</dbReference>
<dbReference type="NCBIfam" id="TIGR00516">
    <property type="entry name" value="acpS"/>
    <property type="match status" value="1"/>
</dbReference>
<dbReference type="NCBIfam" id="TIGR00556">
    <property type="entry name" value="pantethn_trn"/>
    <property type="match status" value="1"/>
</dbReference>
<dbReference type="Pfam" id="PF01648">
    <property type="entry name" value="ACPS"/>
    <property type="match status" value="1"/>
</dbReference>
<dbReference type="SUPFAM" id="SSF56214">
    <property type="entry name" value="4'-phosphopantetheinyl transferase"/>
    <property type="match status" value="1"/>
</dbReference>
<gene>
    <name evidence="1" type="primary">acpS</name>
    <name type="ordered locus">Bphyt_2895</name>
</gene>
<organism>
    <name type="scientific">Paraburkholderia phytofirmans (strain DSM 17436 / LMG 22146 / PsJN)</name>
    <name type="common">Burkholderia phytofirmans</name>
    <dbReference type="NCBI Taxonomy" id="398527"/>
    <lineage>
        <taxon>Bacteria</taxon>
        <taxon>Pseudomonadati</taxon>
        <taxon>Pseudomonadota</taxon>
        <taxon>Betaproteobacteria</taxon>
        <taxon>Burkholderiales</taxon>
        <taxon>Burkholderiaceae</taxon>
        <taxon>Paraburkholderia</taxon>
    </lineage>
</organism>
<proteinExistence type="inferred from homology"/>
<protein>
    <recommendedName>
        <fullName evidence="1">Holo-[acyl-carrier-protein] synthase</fullName>
        <shortName evidence="1">Holo-ACP synthase</shortName>
        <ecNumber evidence="1">2.7.8.7</ecNumber>
    </recommendedName>
    <alternativeName>
        <fullName evidence="1">4'-phosphopantetheinyl transferase AcpS</fullName>
    </alternativeName>
</protein>
<sequence length="140" mass="15135">MAIYGIGTDIVQVSRVAAVMTRTNGRFAEKVLGPDELRVYHARHARSAARGLAFLATRFSAKEAFSKAIGLGMHWPMTWRALQTLNKPSGEPMVVASGELAEWLDARGITARVTISDERDYAVSFVIAETAQAGAADIAE</sequence>
<name>ACPS_PARPJ</name>
<comment type="function">
    <text evidence="1">Transfers the 4'-phosphopantetheine moiety from coenzyme A to a Ser of acyl-carrier-protein.</text>
</comment>
<comment type="catalytic activity">
    <reaction evidence="1">
        <text>apo-[ACP] + CoA = holo-[ACP] + adenosine 3',5'-bisphosphate + H(+)</text>
        <dbReference type="Rhea" id="RHEA:12068"/>
        <dbReference type="Rhea" id="RHEA-COMP:9685"/>
        <dbReference type="Rhea" id="RHEA-COMP:9690"/>
        <dbReference type="ChEBI" id="CHEBI:15378"/>
        <dbReference type="ChEBI" id="CHEBI:29999"/>
        <dbReference type="ChEBI" id="CHEBI:57287"/>
        <dbReference type="ChEBI" id="CHEBI:58343"/>
        <dbReference type="ChEBI" id="CHEBI:64479"/>
        <dbReference type="EC" id="2.7.8.7"/>
    </reaction>
</comment>
<comment type="cofactor">
    <cofactor evidence="1">
        <name>Mg(2+)</name>
        <dbReference type="ChEBI" id="CHEBI:18420"/>
    </cofactor>
</comment>
<comment type="subcellular location">
    <subcellularLocation>
        <location evidence="1">Cytoplasm</location>
    </subcellularLocation>
</comment>
<comment type="similarity">
    <text evidence="1">Belongs to the P-Pant transferase superfamily. AcpS family.</text>
</comment>
<reference key="1">
    <citation type="journal article" date="2011" name="J. Bacteriol.">
        <title>Complete genome sequence of the plant growth-promoting endophyte Burkholderia phytofirmans strain PsJN.</title>
        <authorList>
            <person name="Weilharter A."/>
            <person name="Mitter B."/>
            <person name="Shin M.V."/>
            <person name="Chain P.S."/>
            <person name="Nowak J."/>
            <person name="Sessitsch A."/>
        </authorList>
    </citation>
    <scope>NUCLEOTIDE SEQUENCE [LARGE SCALE GENOMIC DNA]</scope>
    <source>
        <strain>DSM 17436 / LMG 22146 / PsJN</strain>
    </source>
</reference>
<accession>B2SZV1</accession>
<evidence type="ECO:0000255" key="1">
    <source>
        <dbReference type="HAMAP-Rule" id="MF_00101"/>
    </source>
</evidence>